<comment type="catalytic activity">
    <reaction evidence="1">
        <text>tRNA(Leu) + L-leucine + ATP = L-leucyl-tRNA(Leu) + AMP + diphosphate</text>
        <dbReference type="Rhea" id="RHEA:11688"/>
        <dbReference type="Rhea" id="RHEA-COMP:9613"/>
        <dbReference type="Rhea" id="RHEA-COMP:9622"/>
        <dbReference type="ChEBI" id="CHEBI:30616"/>
        <dbReference type="ChEBI" id="CHEBI:33019"/>
        <dbReference type="ChEBI" id="CHEBI:57427"/>
        <dbReference type="ChEBI" id="CHEBI:78442"/>
        <dbReference type="ChEBI" id="CHEBI:78494"/>
        <dbReference type="ChEBI" id="CHEBI:456215"/>
        <dbReference type="EC" id="6.1.1.4"/>
    </reaction>
</comment>
<comment type="subcellular location">
    <subcellularLocation>
        <location evidence="1">Cytoplasm</location>
    </subcellularLocation>
</comment>
<comment type="similarity">
    <text evidence="1">Belongs to the class-I aminoacyl-tRNA synthetase family.</text>
</comment>
<organism>
    <name type="scientific">Yersinia pseudotuberculosis serotype O:3 (strain YPIII)</name>
    <dbReference type="NCBI Taxonomy" id="502800"/>
    <lineage>
        <taxon>Bacteria</taxon>
        <taxon>Pseudomonadati</taxon>
        <taxon>Pseudomonadota</taxon>
        <taxon>Gammaproteobacteria</taxon>
        <taxon>Enterobacterales</taxon>
        <taxon>Yersiniaceae</taxon>
        <taxon>Yersinia</taxon>
    </lineage>
</organism>
<gene>
    <name evidence="1" type="primary">leuS</name>
    <name type="ordered locus">YPK_3015</name>
</gene>
<evidence type="ECO:0000255" key="1">
    <source>
        <dbReference type="HAMAP-Rule" id="MF_00049"/>
    </source>
</evidence>
<proteinExistence type="inferred from homology"/>
<name>SYL_YERPY</name>
<reference key="1">
    <citation type="submission" date="2008-02" db="EMBL/GenBank/DDBJ databases">
        <title>Complete sequence of Yersinia pseudotuberculosis YPIII.</title>
        <authorList>
            <consortium name="US DOE Joint Genome Institute"/>
            <person name="Copeland A."/>
            <person name="Lucas S."/>
            <person name="Lapidus A."/>
            <person name="Glavina del Rio T."/>
            <person name="Dalin E."/>
            <person name="Tice H."/>
            <person name="Bruce D."/>
            <person name="Goodwin L."/>
            <person name="Pitluck S."/>
            <person name="Munk A.C."/>
            <person name="Brettin T."/>
            <person name="Detter J.C."/>
            <person name="Han C."/>
            <person name="Tapia R."/>
            <person name="Schmutz J."/>
            <person name="Larimer F."/>
            <person name="Land M."/>
            <person name="Hauser L."/>
            <person name="Challacombe J.F."/>
            <person name="Green L."/>
            <person name="Lindler L.E."/>
            <person name="Nikolich M.P."/>
            <person name="Richardson P."/>
        </authorList>
    </citation>
    <scope>NUCLEOTIDE SEQUENCE [LARGE SCALE GENOMIC DNA]</scope>
    <source>
        <strain>YPIII</strain>
    </source>
</reference>
<keyword id="KW-0030">Aminoacyl-tRNA synthetase</keyword>
<keyword id="KW-0067">ATP-binding</keyword>
<keyword id="KW-0963">Cytoplasm</keyword>
<keyword id="KW-0436">Ligase</keyword>
<keyword id="KW-0547">Nucleotide-binding</keyword>
<keyword id="KW-0648">Protein biosynthesis</keyword>
<feature type="chain" id="PRO_1000091384" description="Leucine--tRNA ligase">
    <location>
        <begin position="1"/>
        <end position="860"/>
    </location>
</feature>
<feature type="short sequence motif" description="'HIGH' region">
    <location>
        <begin position="42"/>
        <end position="52"/>
    </location>
</feature>
<feature type="short sequence motif" description="'KMSKS' region">
    <location>
        <begin position="619"/>
        <end position="623"/>
    </location>
</feature>
<feature type="binding site" evidence="1">
    <location>
        <position position="622"/>
    </location>
    <ligand>
        <name>ATP</name>
        <dbReference type="ChEBI" id="CHEBI:30616"/>
    </ligand>
</feature>
<sequence length="860" mass="97065">MQEQYRPEDIETQVQLHWQEKQTFKVTEDASKEKYYCLSMLPYPSGRLHMGHVRNYTIGDVISRYQRMLGKNVLQPIGWDAFGLPAEGAAVKNNTAPAPWTYDNIEYMKNQLKLLGFGYDWDREIATCKPDYYRWEQWFFTKLYEKGMVYKKTSAVNWCPHDLTVLANEQVIDGCCWRCDTKVERKEIPQWFIKITDYAEQLLNDLDTLESWPEQVKTMQRNWIGRSEGVDIIFDVVDSEEKLSVYTTRPDTFMGVTYVAVAAGHPLSLQAAATNPALADFVAECRNTKVAEAEMATMEKKGMATGLYAIHPLTGEKLPIWAANFVLMDYGTGAVMAVPGHDARDWEFATKYNLPIKPVILAADGSEPDLSQEAMTEKGTLFNSGEFDGLNHEDGFNAIADKLVALGVGQRKVNYRLRDWGVSRQRYWGAPIPMVTLEDGTVVPTPEDQLPVILPEDVVMDGISSPIKADPEWAKTTVNGIPGLRETDTFDTFMESSWYYARYTCPQYDDGMLDPAAANYWLPVDQYVGGIEHAIMHLMYFRFFHKLLRDAGLVDSDEPAKRLLCQGMVLADAFYYTGNNGERIWVSPVDAIVERDDKGRIVKAVDAEGHELVYAGMSKMSKSKNNGIDPQVMVEKYGADTVRLFMMFASPAEMTLEWQESGVEGANRFLKRVWRLAFDHTAKGAVKPLDIASLTEEQKSLRRDLHKTIAKVTDDVGRRQTFNTAIAAVMELMNKLGRAPQETEQDRALMQEALLAVVRMLYPFTPHVCFSLWQALGGEGDIDTAPWPIADEQAMVEDSKLVVVQVNGKVRGRITVPADATEQQVRERAGQEHLVAKYLDGVTVRKVIYVPGKLLNLVVG</sequence>
<accession>B1JGA5</accession>
<dbReference type="EC" id="6.1.1.4" evidence="1"/>
<dbReference type="EMBL" id="CP000950">
    <property type="protein sequence ID" value="ACA69288.1"/>
    <property type="molecule type" value="Genomic_DNA"/>
</dbReference>
<dbReference type="RefSeq" id="WP_012304390.1">
    <property type="nucleotide sequence ID" value="NZ_CP009792.1"/>
</dbReference>
<dbReference type="SMR" id="B1JGA5"/>
<dbReference type="KEGG" id="ypy:YPK_3015"/>
<dbReference type="PATRIC" id="fig|502800.11.peg.3736"/>
<dbReference type="GO" id="GO:0005829">
    <property type="term" value="C:cytosol"/>
    <property type="evidence" value="ECO:0007669"/>
    <property type="project" value="TreeGrafter"/>
</dbReference>
<dbReference type="GO" id="GO:0002161">
    <property type="term" value="F:aminoacyl-tRNA deacylase activity"/>
    <property type="evidence" value="ECO:0007669"/>
    <property type="project" value="InterPro"/>
</dbReference>
<dbReference type="GO" id="GO:0005524">
    <property type="term" value="F:ATP binding"/>
    <property type="evidence" value="ECO:0007669"/>
    <property type="project" value="UniProtKB-UniRule"/>
</dbReference>
<dbReference type="GO" id="GO:0004823">
    <property type="term" value="F:leucine-tRNA ligase activity"/>
    <property type="evidence" value="ECO:0007669"/>
    <property type="project" value="UniProtKB-UniRule"/>
</dbReference>
<dbReference type="GO" id="GO:0006429">
    <property type="term" value="P:leucyl-tRNA aminoacylation"/>
    <property type="evidence" value="ECO:0007669"/>
    <property type="project" value="UniProtKB-UniRule"/>
</dbReference>
<dbReference type="CDD" id="cd07958">
    <property type="entry name" value="Anticodon_Ia_Leu_BEm"/>
    <property type="match status" value="1"/>
</dbReference>
<dbReference type="CDD" id="cd00812">
    <property type="entry name" value="LeuRS_core"/>
    <property type="match status" value="1"/>
</dbReference>
<dbReference type="FunFam" id="1.10.730.10:FF:000002">
    <property type="entry name" value="Leucine--tRNA ligase"/>
    <property type="match status" value="2"/>
</dbReference>
<dbReference type="FunFam" id="2.20.28.290:FF:000001">
    <property type="entry name" value="Leucine--tRNA ligase"/>
    <property type="match status" value="1"/>
</dbReference>
<dbReference type="FunFam" id="3.10.20.590:FF:000001">
    <property type="entry name" value="Leucine--tRNA ligase"/>
    <property type="match status" value="1"/>
</dbReference>
<dbReference type="FunFam" id="3.40.50.620:FF:000003">
    <property type="entry name" value="Leucine--tRNA ligase"/>
    <property type="match status" value="1"/>
</dbReference>
<dbReference type="FunFam" id="3.40.50.620:FF:000124">
    <property type="entry name" value="Leucine--tRNA ligase"/>
    <property type="match status" value="1"/>
</dbReference>
<dbReference type="FunFam" id="3.90.740.10:FF:000012">
    <property type="entry name" value="Leucine--tRNA ligase"/>
    <property type="match status" value="1"/>
</dbReference>
<dbReference type="Gene3D" id="2.20.28.290">
    <property type="match status" value="1"/>
</dbReference>
<dbReference type="Gene3D" id="3.10.20.590">
    <property type="match status" value="1"/>
</dbReference>
<dbReference type="Gene3D" id="3.40.50.620">
    <property type="entry name" value="HUPs"/>
    <property type="match status" value="2"/>
</dbReference>
<dbReference type="Gene3D" id="1.10.730.10">
    <property type="entry name" value="Isoleucyl-tRNA Synthetase, Domain 1"/>
    <property type="match status" value="2"/>
</dbReference>
<dbReference type="Gene3D" id="3.90.740.10">
    <property type="entry name" value="Valyl/Leucyl/Isoleucyl-tRNA synthetase, editing domain"/>
    <property type="match status" value="1"/>
</dbReference>
<dbReference type="HAMAP" id="MF_00049_B">
    <property type="entry name" value="Leu_tRNA_synth_B"/>
    <property type="match status" value="1"/>
</dbReference>
<dbReference type="InterPro" id="IPR001412">
    <property type="entry name" value="aa-tRNA-synth_I_CS"/>
</dbReference>
<dbReference type="InterPro" id="IPR002300">
    <property type="entry name" value="aa-tRNA-synth_Ia"/>
</dbReference>
<dbReference type="InterPro" id="IPR002302">
    <property type="entry name" value="Leu-tRNA-ligase"/>
</dbReference>
<dbReference type="InterPro" id="IPR025709">
    <property type="entry name" value="Leu_tRNA-synth_edit"/>
</dbReference>
<dbReference type="InterPro" id="IPR013155">
    <property type="entry name" value="M/V/L/I-tRNA-synth_anticd-bd"/>
</dbReference>
<dbReference type="InterPro" id="IPR015413">
    <property type="entry name" value="Methionyl/Leucyl_tRNA_Synth"/>
</dbReference>
<dbReference type="InterPro" id="IPR014729">
    <property type="entry name" value="Rossmann-like_a/b/a_fold"/>
</dbReference>
<dbReference type="InterPro" id="IPR009080">
    <property type="entry name" value="tRNAsynth_Ia_anticodon-bd"/>
</dbReference>
<dbReference type="InterPro" id="IPR009008">
    <property type="entry name" value="Val/Leu/Ile-tRNA-synth_edit"/>
</dbReference>
<dbReference type="NCBIfam" id="TIGR00396">
    <property type="entry name" value="leuS_bact"/>
    <property type="match status" value="1"/>
</dbReference>
<dbReference type="PANTHER" id="PTHR43740:SF2">
    <property type="entry name" value="LEUCINE--TRNA LIGASE, MITOCHONDRIAL"/>
    <property type="match status" value="1"/>
</dbReference>
<dbReference type="PANTHER" id="PTHR43740">
    <property type="entry name" value="LEUCYL-TRNA SYNTHETASE"/>
    <property type="match status" value="1"/>
</dbReference>
<dbReference type="Pfam" id="PF08264">
    <property type="entry name" value="Anticodon_1"/>
    <property type="match status" value="1"/>
</dbReference>
<dbReference type="Pfam" id="PF00133">
    <property type="entry name" value="tRNA-synt_1"/>
    <property type="match status" value="2"/>
</dbReference>
<dbReference type="Pfam" id="PF13603">
    <property type="entry name" value="tRNA-synt_1_2"/>
    <property type="match status" value="1"/>
</dbReference>
<dbReference type="Pfam" id="PF09334">
    <property type="entry name" value="tRNA-synt_1g"/>
    <property type="match status" value="1"/>
</dbReference>
<dbReference type="PRINTS" id="PR00985">
    <property type="entry name" value="TRNASYNTHLEU"/>
</dbReference>
<dbReference type="SUPFAM" id="SSF47323">
    <property type="entry name" value="Anticodon-binding domain of a subclass of class I aminoacyl-tRNA synthetases"/>
    <property type="match status" value="1"/>
</dbReference>
<dbReference type="SUPFAM" id="SSF52374">
    <property type="entry name" value="Nucleotidylyl transferase"/>
    <property type="match status" value="1"/>
</dbReference>
<dbReference type="SUPFAM" id="SSF50677">
    <property type="entry name" value="ValRS/IleRS/LeuRS editing domain"/>
    <property type="match status" value="1"/>
</dbReference>
<dbReference type="PROSITE" id="PS00178">
    <property type="entry name" value="AA_TRNA_LIGASE_I"/>
    <property type="match status" value="1"/>
</dbReference>
<protein>
    <recommendedName>
        <fullName evidence="1">Leucine--tRNA ligase</fullName>
        <ecNumber evidence="1">6.1.1.4</ecNumber>
    </recommendedName>
    <alternativeName>
        <fullName evidence="1">Leucyl-tRNA synthetase</fullName>
        <shortName evidence="1">LeuRS</shortName>
    </alternativeName>
</protein>